<dbReference type="EC" id="2.6.1.52" evidence="1"/>
<dbReference type="EMBL" id="AE016828">
    <property type="protein sequence ID" value="AAO90071.1"/>
    <property type="molecule type" value="Genomic_DNA"/>
</dbReference>
<dbReference type="RefSeq" id="NP_819557.1">
    <property type="nucleotide sequence ID" value="NC_002971.4"/>
</dbReference>
<dbReference type="RefSeq" id="WP_010957636.1">
    <property type="nucleotide sequence ID" value="NC_002971.4"/>
</dbReference>
<dbReference type="SMR" id="Q83E12"/>
<dbReference type="STRING" id="227377.CBU_0525"/>
<dbReference type="EnsemblBacteria" id="AAO90071">
    <property type="protein sequence ID" value="AAO90071"/>
    <property type="gene ID" value="CBU_0525"/>
</dbReference>
<dbReference type="GeneID" id="1208410"/>
<dbReference type="KEGG" id="cbu:CBU_0525"/>
<dbReference type="PATRIC" id="fig|227377.7.peg.520"/>
<dbReference type="eggNOG" id="COG1932">
    <property type="taxonomic scope" value="Bacteria"/>
</dbReference>
<dbReference type="HOGENOM" id="CLU_034866_0_2_6"/>
<dbReference type="OrthoDB" id="9809412at2"/>
<dbReference type="UniPathway" id="UPA00135">
    <property type="reaction ID" value="UER00197"/>
</dbReference>
<dbReference type="UniPathway" id="UPA00244">
    <property type="reaction ID" value="UER00311"/>
</dbReference>
<dbReference type="Proteomes" id="UP000002671">
    <property type="component" value="Chromosome"/>
</dbReference>
<dbReference type="GO" id="GO:0005737">
    <property type="term" value="C:cytoplasm"/>
    <property type="evidence" value="ECO:0000318"/>
    <property type="project" value="GO_Central"/>
</dbReference>
<dbReference type="GO" id="GO:0004648">
    <property type="term" value="F:O-phospho-L-serine:2-oxoglutarate aminotransferase activity"/>
    <property type="evidence" value="ECO:0000318"/>
    <property type="project" value="GO_Central"/>
</dbReference>
<dbReference type="GO" id="GO:0030170">
    <property type="term" value="F:pyridoxal phosphate binding"/>
    <property type="evidence" value="ECO:0000318"/>
    <property type="project" value="GO_Central"/>
</dbReference>
<dbReference type="GO" id="GO:0006564">
    <property type="term" value="P:L-serine biosynthetic process"/>
    <property type="evidence" value="ECO:0000318"/>
    <property type="project" value="GO_Central"/>
</dbReference>
<dbReference type="GO" id="GO:0008615">
    <property type="term" value="P:pyridoxine biosynthetic process"/>
    <property type="evidence" value="ECO:0007669"/>
    <property type="project" value="UniProtKB-UniRule"/>
</dbReference>
<dbReference type="FunFam" id="3.40.640.10:FF:000010">
    <property type="entry name" value="Phosphoserine aminotransferase"/>
    <property type="match status" value="1"/>
</dbReference>
<dbReference type="FunFam" id="3.90.1150.10:FF:000006">
    <property type="entry name" value="Phosphoserine aminotransferase"/>
    <property type="match status" value="1"/>
</dbReference>
<dbReference type="Gene3D" id="3.90.1150.10">
    <property type="entry name" value="Aspartate Aminotransferase, domain 1"/>
    <property type="match status" value="1"/>
</dbReference>
<dbReference type="Gene3D" id="3.40.640.10">
    <property type="entry name" value="Type I PLP-dependent aspartate aminotransferase-like (Major domain)"/>
    <property type="match status" value="1"/>
</dbReference>
<dbReference type="HAMAP" id="MF_00160">
    <property type="entry name" value="SerC_aminotrans_5"/>
    <property type="match status" value="1"/>
</dbReference>
<dbReference type="InterPro" id="IPR000192">
    <property type="entry name" value="Aminotrans_V_dom"/>
</dbReference>
<dbReference type="InterPro" id="IPR020578">
    <property type="entry name" value="Aminotrans_V_PyrdxlP_BS"/>
</dbReference>
<dbReference type="InterPro" id="IPR022278">
    <property type="entry name" value="Pser_aminoTfrase"/>
</dbReference>
<dbReference type="InterPro" id="IPR015424">
    <property type="entry name" value="PyrdxlP-dep_Trfase"/>
</dbReference>
<dbReference type="InterPro" id="IPR015421">
    <property type="entry name" value="PyrdxlP-dep_Trfase_major"/>
</dbReference>
<dbReference type="InterPro" id="IPR015422">
    <property type="entry name" value="PyrdxlP-dep_Trfase_small"/>
</dbReference>
<dbReference type="NCBIfam" id="NF003764">
    <property type="entry name" value="PRK05355.1"/>
    <property type="match status" value="1"/>
</dbReference>
<dbReference type="NCBIfam" id="TIGR01364">
    <property type="entry name" value="serC_1"/>
    <property type="match status" value="1"/>
</dbReference>
<dbReference type="PANTHER" id="PTHR43247">
    <property type="entry name" value="PHOSPHOSERINE AMINOTRANSFERASE"/>
    <property type="match status" value="1"/>
</dbReference>
<dbReference type="PANTHER" id="PTHR43247:SF1">
    <property type="entry name" value="PHOSPHOSERINE AMINOTRANSFERASE"/>
    <property type="match status" value="1"/>
</dbReference>
<dbReference type="Pfam" id="PF00266">
    <property type="entry name" value="Aminotran_5"/>
    <property type="match status" value="1"/>
</dbReference>
<dbReference type="PIRSF" id="PIRSF000525">
    <property type="entry name" value="SerC"/>
    <property type="match status" value="1"/>
</dbReference>
<dbReference type="SUPFAM" id="SSF53383">
    <property type="entry name" value="PLP-dependent transferases"/>
    <property type="match status" value="1"/>
</dbReference>
<dbReference type="PROSITE" id="PS00595">
    <property type="entry name" value="AA_TRANSFER_CLASS_5"/>
    <property type="match status" value="1"/>
</dbReference>
<evidence type="ECO:0000255" key="1">
    <source>
        <dbReference type="HAMAP-Rule" id="MF_00160"/>
    </source>
</evidence>
<name>SERC_COXBU</name>
<accession>Q83E12</accession>
<reference key="1">
    <citation type="journal article" date="2003" name="Proc. Natl. Acad. Sci. U.S.A.">
        <title>Complete genome sequence of the Q-fever pathogen, Coxiella burnetii.</title>
        <authorList>
            <person name="Seshadri R."/>
            <person name="Paulsen I.T."/>
            <person name="Eisen J.A."/>
            <person name="Read T.D."/>
            <person name="Nelson K.E."/>
            <person name="Nelson W.C."/>
            <person name="Ward N.L."/>
            <person name="Tettelin H."/>
            <person name="Davidsen T.M."/>
            <person name="Beanan M.J."/>
            <person name="DeBoy R.T."/>
            <person name="Daugherty S.C."/>
            <person name="Brinkac L.M."/>
            <person name="Madupu R."/>
            <person name="Dodson R.J."/>
            <person name="Khouri H.M."/>
            <person name="Lee K.H."/>
            <person name="Carty H.A."/>
            <person name="Scanlan D."/>
            <person name="Heinzen R.A."/>
            <person name="Thompson H.A."/>
            <person name="Samuel J.E."/>
            <person name="Fraser C.M."/>
            <person name="Heidelberg J.F."/>
        </authorList>
    </citation>
    <scope>NUCLEOTIDE SEQUENCE [LARGE SCALE GENOMIC DNA]</scope>
    <source>
        <strain>RSA 493 / Nine Mile phase I</strain>
    </source>
</reference>
<proteinExistence type="inferred from homology"/>
<organism>
    <name type="scientific">Coxiella burnetii (strain RSA 493 / Nine Mile phase I)</name>
    <dbReference type="NCBI Taxonomy" id="227377"/>
    <lineage>
        <taxon>Bacteria</taxon>
        <taxon>Pseudomonadati</taxon>
        <taxon>Pseudomonadota</taxon>
        <taxon>Gammaproteobacteria</taxon>
        <taxon>Legionellales</taxon>
        <taxon>Coxiellaceae</taxon>
        <taxon>Coxiella</taxon>
    </lineage>
</organism>
<feature type="chain" id="PRO_0000150165" description="Phosphoserine aminotransferase">
    <location>
        <begin position="1"/>
        <end position="360"/>
    </location>
</feature>
<feature type="binding site" evidence="1">
    <location>
        <position position="42"/>
    </location>
    <ligand>
        <name>L-glutamate</name>
        <dbReference type="ChEBI" id="CHEBI:29985"/>
    </ligand>
</feature>
<feature type="binding site" evidence="1">
    <location>
        <position position="102"/>
    </location>
    <ligand>
        <name>pyridoxal 5'-phosphate</name>
        <dbReference type="ChEBI" id="CHEBI:597326"/>
    </ligand>
</feature>
<feature type="binding site" evidence="1">
    <location>
        <position position="152"/>
    </location>
    <ligand>
        <name>pyridoxal 5'-phosphate</name>
        <dbReference type="ChEBI" id="CHEBI:597326"/>
    </ligand>
</feature>
<feature type="binding site" evidence="1">
    <location>
        <position position="171"/>
    </location>
    <ligand>
        <name>pyridoxal 5'-phosphate</name>
        <dbReference type="ChEBI" id="CHEBI:597326"/>
    </ligand>
</feature>
<feature type="binding site" evidence="1">
    <location>
        <position position="194"/>
    </location>
    <ligand>
        <name>pyridoxal 5'-phosphate</name>
        <dbReference type="ChEBI" id="CHEBI:597326"/>
    </ligand>
</feature>
<feature type="binding site" evidence="1">
    <location>
        <begin position="237"/>
        <end position="238"/>
    </location>
    <ligand>
        <name>pyridoxal 5'-phosphate</name>
        <dbReference type="ChEBI" id="CHEBI:597326"/>
    </ligand>
</feature>
<feature type="modified residue" description="N6-(pyridoxal phosphate)lysine" evidence="1">
    <location>
        <position position="195"/>
    </location>
</feature>
<protein>
    <recommendedName>
        <fullName evidence="1">Phosphoserine aminotransferase</fullName>
        <ecNumber evidence="1">2.6.1.52</ecNumber>
    </recommendedName>
    <alternativeName>
        <fullName evidence="1">Phosphohydroxythreonine aminotransferase</fullName>
        <shortName evidence="1">PSAT</shortName>
    </alternativeName>
</protein>
<keyword id="KW-0028">Amino-acid biosynthesis</keyword>
<keyword id="KW-0032">Aminotransferase</keyword>
<keyword id="KW-0963">Cytoplasm</keyword>
<keyword id="KW-0663">Pyridoxal phosphate</keyword>
<keyword id="KW-0664">Pyridoxine biosynthesis</keyword>
<keyword id="KW-1185">Reference proteome</keyword>
<keyword id="KW-0718">Serine biosynthesis</keyword>
<keyword id="KW-0808">Transferase</keyword>
<comment type="function">
    <text evidence="1">Catalyzes the reversible conversion of 3-phosphohydroxypyruvate to phosphoserine and of 3-hydroxy-2-oxo-4-phosphonooxybutanoate to phosphohydroxythreonine.</text>
</comment>
<comment type="catalytic activity">
    <reaction evidence="1">
        <text>O-phospho-L-serine + 2-oxoglutarate = 3-phosphooxypyruvate + L-glutamate</text>
        <dbReference type="Rhea" id="RHEA:14329"/>
        <dbReference type="ChEBI" id="CHEBI:16810"/>
        <dbReference type="ChEBI" id="CHEBI:18110"/>
        <dbReference type="ChEBI" id="CHEBI:29985"/>
        <dbReference type="ChEBI" id="CHEBI:57524"/>
        <dbReference type="EC" id="2.6.1.52"/>
    </reaction>
</comment>
<comment type="catalytic activity">
    <reaction evidence="1">
        <text>4-(phosphooxy)-L-threonine + 2-oxoglutarate = (R)-3-hydroxy-2-oxo-4-phosphooxybutanoate + L-glutamate</text>
        <dbReference type="Rhea" id="RHEA:16573"/>
        <dbReference type="ChEBI" id="CHEBI:16810"/>
        <dbReference type="ChEBI" id="CHEBI:29985"/>
        <dbReference type="ChEBI" id="CHEBI:58452"/>
        <dbReference type="ChEBI" id="CHEBI:58538"/>
        <dbReference type="EC" id="2.6.1.52"/>
    </reaction>
</comment>
<comment type="cofactor">
    <cofactor evidence="1">
        <name>pyridoxal 5'-phosphate</name>
        <dbReference type="ChEBI" id="CHEBI:597326"/>
    </cofactor>
    <text evidence="1">Binds 1 pyridoxal phosphate per subunit.</text>
</comment>
<comment type="pathway">
    <text evidence="1">Amino-acid biosynthesis; L-serine biosynthesis; L-serine from 3-phospho-D-glycerate: step 2/3.</text>
</comment>
<comment type="pathway">
    <text evidence="1">Cofactor biosynthesis; pyridoxine 5'-phosphate biosynthesis; pyridoxine 5'-phosphate from D-erythrose 4-phosphate: step 3/5.</text>
</comment>
<comment type="subunit">
    <text evidence="1">Homodimer.</text>
</comment>
<comment type="subcellular location">
    <subcellularLocation>
        <location evidence="1">Cytoplasm</location>
    </subcellularLocation>
</comment>
<comment type="similarity">
    <text evidence="1">Belongs to the class-V pyridoxal-phosphate-dependent aminotransferase family. SerC subfamily.</text>
</comment>
<gene>
    <name evidence="1" type="primary">serC</name>
    <name type="ordered locus">CBU_0525</name>
</gene>
<sequence length="360" mass="40689">MSRVYNFSAGPAAIPEEVLFTVRDELLDWHGIGMSIAEVSHRGEEFIGVAEEAERDLRELLAVPESYHILFLQGGSRLQFDMVPMNLLANHKKAVYIDSGVWSNLAIREAKNYCDPHLATNAKELNYTGIPDQATWDMPNEAAYFYYVDNETVNGIEFPFIPDTDLTLVCDMSSNLLSRPFDVSRYGLIFACAQKNMGLAGLTIVIVHDDLLKRSPLPTTPSYLQYALHAKERSFINTPPTFAWYLAGLIFKWVKNQGGVAVLAERNQRKAAKLYKFIDKSNFFDNPINPTYRSRMNVIFRLADERLNSLFLKEATENGLANLKGHRLLGGMRASIYNAMTEEGVDALINFMGQFEKRHG</sequence>